<dbReference type="EMBL" id="Y12582">
    <property type="protein sequence ID" value="CAA73161.1"/>
    <property type="molecule type" value="mRNA"/>
</dbReference>
<dbReference type="EMBL" id="AK145116">
    <property type="protein sequence ID" value="BAE26243.1"/>
    <property type="molecule type" value="mRNA"/>
</dbReference>
<dbReference type="EMBL" id="BX530055">
    <property type="status" value="NOT_ANNOTATED_CDS"/>
    <property type="molecule type" value="Genomic_DNA"/>
</dbReference>
<dbReference type="CCDS" id="CCDS30455.1"/>
<dbReference type="RefSeq" id="NP_031629.3">
    <property type="nucleotide sequence ID" value="NM_007603.3"/>
</dbReference>
<dbReference type="SMR" id="O35646"/>
<dbReference type="BioGRID" id="198475">
    <property type="interactions" value="8"/>
</dbReference>
<dbReference type="FunCoup" id="O35646">
    <property type="interactions" value="43"/>
</dbReference>
<dbReference type="STRING" id="10090.ENSMUSP00000084573"/>
<dbReference type="MEROPS" id="C02.971"/>
<dbReference type="iPTMnet" id="O35646"/>
<dbReference type="PhosphoSitePlus" id="O35646"/>
<dbReference type="SwissPalm" id="O35646"/>
<dbReference type="PaxDb" id="10090-ENSMUSP00000084573"/>
<dbReference type="PeptideAtlas" id="O35646"/>
<dbReference type="ProteomicsDB" id="281765"/>
<dbReference type="Pumba" id="O35646"/>
<dbReference type="Antibodypedia" id="29529">
    <property type="antibodies" value="212 antibodies from 33 providers"/>
</dbReference>
<dbReference type="DNASU" id="12338"/>
<dbReference type="Ensembl" id="ENSMUST00000087316.6">
    <property type="protein sequence ID" value="ENSMUSP00000084573.6"/>
    <property type="gene ID" value="ENSMUSG00000067276.6"/>
</dbReference>
<dbReference type="GeneID" id="12338"/>
<dbReference type="KEGG" id="mmu:12338"/>
<dbReference type="UCSC" id="uc009umk.2">
    <property type="organism name" value="mouse"/>
</dbReference>
<dbReference type="AGR" id="MGI:1100850"/>
<dbReference type="CTD" id="827"/>
<dbReference type="MGI" id="MGI:1100850">
    <property type="gene designation" value="Capn6"/>
</dbReference>
<dbReference type="VEuPathDB" id="HostDB:ENSMUSG00000067276"/>
<dbReference type="eggNOG" id="KOG0045">
    <property type="taxonomic scope" value="Eukaryota"/>
</dbReference>
<dbReference type="GeneTree" id="ENSGT00940000156128"/>
<dbReference type="HOGENOM" id="CLU_010982_3_2_1"/>
<dbReference type="InParanoid" id="O35646"/>
<dbReference type="OMA" id="QKGRYTD"/>
<dbReference type="OrthoDB" id="424753at2759"/>
<dbReference type="PhylomeDB" id="O35646"/>
<dbReference type="TreeFam" id="TF314748"/>
<dbReference type="BRENDA" id="3.4.22.B26">
    <property type="organism ID" value="3474"/>
</dbReference>
<dbReference type="Reactome" id="R-MMU-1474228">
    <property type="pathway name" value="Degradation of the extracellular matrix"/>
</dbReference>
<dbReference type="BioGRID-ORCS" id="12338">
    <property type="hits" value="0 hits in 77 CRISPR screens"/>
</dbReference>
<dbReference type="ChiTaRS" id="Capn6">
    <property type="organism name" value="mouse"/>
</dbReference>
<dbReference type="PRO" id="PR:O35646"/>
<dbReference type="Proteomes" id="UP000000589">
    <property type="component" value="Chromosome X"/>
</dbReference>
<dbReference type="RNAct" id="O35646">
    <property type="molecule type" value="protein"/>
</dbReference>
<dbReference type="Bgee" id="ENSMUSG00000067276">
    <property type="expression patterns" value="Expressed in humerus cartilage element and 207 other cell types or tissues"/>
</dbReference>
<dbReference type="GO" id="GO:0005874">
    <property type="term" value="C:microtubule"/>
    <property type="evidence" value="ECO:0000314"/>
    <property type="project" value="UniProtKB"/>
</dbReference>
<dbReference type="GO" id="GO:0048471">
    <property type="term" value="C:perinuclear region of cytoplasm"/>
    <property type="evidence" value="ECO:0007669"/>
    <property type="project" value="UniProtKB-SubCell"/>
</dbReference>
<dbReference type="GO" id="GO:0005876">
    <property type="term" value="C:spindle microtubule"/>
    <property type="evidence" value="ECO:0007669"/>
    <property type="project" value="Ensembl"/>
</dbReference>
<dbReference type="GO" id="GO:0004198">
    <property type="term" value="F:calcium-dependent cysteine-type endopeptidase activity"/>
    <property type="evidence" value="ECO:0007669"/>
    <property type="project" value="InterPro"/>
</dbReference>
<dbReference type="GO" id="GO:0008017">
    <property type="term" value="F:microtubule binding"/>
    <property type="evidence" value="ECO:0000314"/>
    <property type="project" value="UniProtKB"/>
</dbReference>
<dbReference type="GO" id="GO:0001578">
    <property type="term" value="P:microtubule bundle formation"/>
    <property type="evidence" value="ECO:0000315"/>
    <property type="project" value="UniProtKB"/>
</dbReference>
<dbReference type="GO" id="GO:0006508">
    <property type="term" value="P:proteolysis"/>
    <property type="evidence" value="ECO:0007669"/>
    <property type="project" value="InterPro"/>
</dbReference>
<dbReference type="GO" id="GO:0051493">
    <property type="term" value="P:regulation of cytoskeleton organization"/>
    <property type="evidence" value="ECO:0000315"/>
    <property type="project" value="UniProtKB"/>
</dbReference>
<dbReference type="CDD" id="cd04046">
    <property type="entry name" value="C2_Calpain"/>
    <property type="match status" value="1"/>
</dbReference>
<dbReference type="CDD" id="cd00214">
    <property type="entry name" value="Calpain_III"/>
    <property type="match status" value="1"/>
</dbReference>
<dbReference type="CDD" id="cd00044">
    <property type="entry name" value="CysPc"/>
    <property type="match status" value="1"/>
</dbReference>
<dbReference type="FunFam" id="2.60.120.380:FF:000009">
    <property type="entry name" value="Calpain-6"/>
    <property type="match status" value="1"/>
</dbReference>
<dbReference type="FunFam" id="2.60.40.150:FF:000131">
    <property type="entry name" value="calpain-6"/>
    <property type="match status" value="1"/>
</dbReference>
<dbReference type="FunFam" id="3.90.70.10:FF:000064">
    <property type="entry name" value="calpain-6"/>
    <property type="match status" value="1"/>
</dbReference>
<dbReference type="Gene3D" id="2.60.120.380">
    <property type="match status" value="1"/>
</dbReference>
<dbReference type="Gene3D" id="2.60.40.150">
    <property type="entry name" value="C2 domain"/>
    <property type="match status" value="1"/>
</dbReference>
<dbReference type="Gene3D" id="3.90.70.10">
    <property type="entry name" value="Cysteine proteinases"/>
    <property type="match status" value="1"/>
</dbReference>
<dbReference type="InterPro" id="IPR033884">
    <property type="entry name" value="C2_Calpain"/>
</dbReference>
<dbReference type="InterPro" id="IPR000008">
    <property type="entry name" value="C2_dom"/>
</dbReference>
<dbReference type="InterPro" id="IPR035892">
    <property type="entry name" value="C2_domain_sf"/>
</dbReference>
<dbReference type="InterPro" id="IPR033883">
    <property type="entry name" value="C2_III"/>
</dbReference>
<dbReference type="InterPro" id="IPR022684">
    <property type="entry name" value="Calpain_cysteine_protease"/>
</dbReference>
<dbReference type="InterPro" id="IPR022682">
    <property type="entry name" value="Calpain_domain_III"/>
</dbReference>
<dbReference type="InterPro" id="IPR022683">
    <property type="entry name" value="Calpain_III"/>
</dbReference>
<dbReference type="InterPro" id="IPR036213">
    <property type="entry name" value="Calpain_III_sf"/>
</dbReference>
<dbReference type="InterPro" id="IPR038765">
    <property type="entry name" value="Papain-like_cys_pep_sf"/>
</dbReference>
<dbReference type="InterPro" id="IPR001300">
    <property type="entry name" value="Peptidase_C2_calpain_cat"/>
</dbReference>
<dbReference type="PANTHER" id="PTHR10183">
    <property type="entry name" value="CALPAIN"/>
    <property type="match status" value="1"/>
</dbReference>
<dbReference type="PANTHER" id="PTHR10183:SF381">
    <property type="entry name" value="CALPAIN-6"/>
    <property type="match status" value="1"/>
</dbReference>
<dbReference type="Pfam" id="PF00168">
    <property type="entry name" value="C2"/>
    <property type="match status" value="1"/>
</dbReference>
<dbReference type="Pfam" id="PF01067">
    <property type="entry name" value="Calpain_III"/>
    <property type="match status" value="1"/>
</dbReference>
<dbReference type="Pfam" id="PF00648">
    <property type="entry name" value="Peptidase_C2"/>
    <property type="match status" value="1"/>
</dbReference>
<dbReference type="PRINTS" id="PR00704">
    <property type="entry name" value="CALPAIN"/>
</dbReference>
<dbReference type="SMART" id="SM00239">
    <property type="entry name" value="C2"/>
    <property type="match status" value="1"/>
</dbReference>
<dbReference type="SMART" id="SM00720">
    <property type="entry name" value="calpain_III"/>
    <property type="match status" value="1"/>
</dbReference>
<dbReference type="SMART" id="SM00230">
    <property type="entry name" value="CysPc"/>
    <property type="match status" value="1"/>
</dbReference>
<dbReference type="SUPFAM" id="SSF49562">
    <property type="entry name" value="C2 domain (Calcium/lipid-binding domain, CaLB)"/>
    <property type="match status" value="1"/>
</dbReference>
<dbReference type="SUPFAM" id="SSF49758">
    <property type="entry name" value="Calpain large subunit, middle domain (domain III)"/>
    <property type="match status" value="1"/>
</dbReference>
<dbReference type="SUPFAM" id="SSF54001">
    <property type="entry name" value="Cysteine proteinases"/>
    <property type="match status" value="1"/>
</dbReference>
<dbReference type="PROSITE" id="PS50004">
    <property type="entry name" value="C2"/>
    <property type="match status" value="1"/>
</dbReference>
<dbReference type="PROSITE" id="PS50203">
    <property type="entry name" value="CALPAIN_CAT"/>
    <property type="match status" value="1"/>
</dbReference>
<keyword id="KW-0963">Cytoplasm</keyword>
<keyword id="KW-0206">Cytoskeleton</keyword>
<keyword id="KW-0493">Microtubule</keyword>
<keyword id="KW-1185">Reference proteome</keyword>
<organism>
    <name type="scientific">Mus musculus</name>
    <name type="common">Mouse</name>
    <dbReference type="NCBI Taxonomy" id="10090"/>
    <lineage>
        <taxon>Eukaryota</taxon>
        <taxon>Metazoa</taxon>
        <taxon>Chordata</taxon>
        <taxon>Craniata</taxon>
        <taxon>Vertebrata</taxon>
        <taxon>Euteleostomi</taxon>
        <taxon>Mammalia</taxon>
        <taxon>Eutheria</taxon>
        <taxon>Euarchontoglires</taxon>
        <taxon>Glires</taxon>
        <taxon>Rodentia</taxon>
        <taxon>Myomorpha</taxon>
        <taxon>Muroidea</taxon>
        <taxon>Muridae</taxon>
        <taxon>Murinae</taxon>
        <taxon>Mus</taxon>
        <taxon>Mus</taxon>
    </lineage>
</organism>
<gene>
    <name type="primary">Capn6</name>
    <name type="synonym">Capa6</name>
</gene>
<accession>O35646</accession>
<accession>Q3UM55</accession>
<evidence type="ECO:0000250" key="1"/>
<evidence type="ECO:0000255" key="2">
    <source>
        <dbReference type="PROSITE-ProRule" id="PRU00041"/>
    </source>
</evidence>
<evidence type="ECO:0000255" key="3">
    <source>
        <dbReference type="PROSITE-ProRule" id="PRU00239"/>
    </source>
</evidence>
<evidence type="ECO:0000269" key="4">
    <source>
    </source>
</evidence>
<evidence type="ECO:0000269" key="5">
    <source>
    </source>
</evidence>
<evidence type="ECO:0000269" key="6">
    <source>
    </source>
</evidence>
<evidence type="ECO:0000305" key="7"/>
<proteinExistence type="evidence at protein level"/>
<protein>
    <recommendedName>
        <fullName>Calpain-6</fullName>
    </recommendedName>
</protein>
<reference key="1">
    <citation type="journal article" date="1998" name="Genomics">
        <title>Genomic organization of mouse Capn5 and Capn6 genes confirms that they are a distinct calpain subfamily.</title>
        <authorList>
            <person name="Matena K."/>
            <person name="Boehm T."/>
            <person name="Dear N.T."/>
        </authorList>
    </citation>
    <scope>NUCLEOTIDE SEQUENCE [MRNA]</scope>
    <source>
        <strain>BALB/cJ</strain>
    </source>
</reference>
<reference key="2">
    <citation type="journal article" date="2005" name="Science">
        <title>The transcriptional landscape of the mammalian genome.</title>
        <authorList>
            <person name="Carninci P."/>
            <person name="Kasukawa T."/>
            <person name="Katayama S."/>
            <person name="Gough J."/>
            <person name="Frith M.C."/>
            <person name="Maeda N."/>
            <person name="Oyama R."/>
            <person name="Ravasi T."/>
            <person name="Lenhard B."/>
            <person name="Wells C."/>
            <person name="Kodzius R."/>
            <person name="Shimokawa K."/>
            <person name="Bajic V.B."/>
            <person name="Brenner S.E."/>
            <person name="Batalov S."/>
            <person name="Forrest A.R."/>
            <person name="Zavolan M."/>
            <person name="Davis M.J."/>
            <person name="Wilming L.G."/>
            <person name="Aidinis V."/>
            <person name="Allen J.E."/>
            <person name="Ambesi-Impiombato A."/>
            <person name="Apweiler R."/>
            <person name="Aturaliya R.N."/>
            <person name="Bailey T.L."/>
            <person name="Bansal M."/>
            <person name="Baxter L."/>
            <person name="Beisel K.W."/>
            <person name="Bersano T."/>
            <person name="Bono H."/>
            <person name="Chalk A.M."/>
            <person name="Chiu K.P."/>
            <person name="Choudhary V."/>
            <person name="Christoffels A."/>
            <person name="Clutterbuck D.R."/>
            <person name="Crowe M.L."/>
            <person name="Dalla E."/>
            <person name="Dalrymple B.P."/>
            <person name="de Bono B."/>
            <person name="Della Gatta G."/>
            <person name="di Bernardo D."/>
            <person name="Down T."/>
            <person name="Engstrom P."/>
            <person name="Fagiolini M."/>
            <person name="Faulkner G."/>
            <person name="Fletcher C.F."/>
            <person name="Fukushima T."/>
            <person name="Furuno M."/>
            <person name="Futaki S."/>
            <person name="Gariboldi M."/>
            <person name="Georgii-Hemming P."/>
            <person name="Gingeras T.R."/>
            <person name="Gojobori T."/>
            <person name="Green R.E."/>
            <person name="Gustincich S."/>
            <person name="Harbers M."/>
            <person name="Hayashi Y."/>
            <person name="Hensch T.K."/>
            <person name="Hirokawa N."/>
            <person name="Hill D."/>
            <person name="Huminiecki L."/>
            <person name="Iacono M."/>
            <person name="Ikeo K."/>
            <person name="Iwama A."/>
            <person name="Ishikawa T."/>
            <person name="Jakt M."/>
            <person name="Kanapin A."/>
            <person name="Katoh M."/>
            <person name="Kawasawa Y."/>
            <person name="Kelso J."/>
            <person name="Kitamura H."/>
            <person name="Kitano H."/>
            <person name="Kollias G."/>
            <person name="Krishnan S.P."/>
            <person name="Kruger A."/>
            <person name="Kummerfeld S.K."/>
            <person name="Kurochkin I.V."/>
            <person name="Lareau L.F."/>
            <person name="Lazarevic D."/>
            <person name="Lipovich L."/>
            <person name="Liu J."/>
            <person name="Liuni S."/>
            <person name="McWilliam S."/>
            <person name="Madan Babu M."/>
            <person name="Madera M."/>
            <person name="Marchionni L."/>
            <person name="Matsuda H."/>
            <person name="Matsuzawa S."/>
            <person name="Miki H."/>
            <person name="Mignone F."/>
            <person name="Miyake S."/>
            <person name="Morris K."/>
            <person name="Mottagui-Tabar S."/>
            <person name="Mulder N."/>
            <person name="Nakano N."/>
            <person name="Nakauchi H."/>
            <person name="Ng P."/>
            <person name="Nilsson R."/>
            <person name="Nishiguchi S."/>
            <person name="Nishikawa S."/>
            <person name="Nori F."/>
            <person name="Ohara O."/>
            <person name="Okazaki Y."/>
            <person name="Orlando V."/>
            <person name="Pang K.C."/>
            <person name="Pavan W.J."/>
            <person name="Pavesi G."/>
            <person name="Pesole G."/>
            <person name="Petrovsky N."/>
            <person name="Piazza S."/>
            <person name="Reed J."/>
            <person name="Reid J.F."/>
            <person name="Ring B.Z."/>
            <person name="Ringwald M."/>
            <person name="Rost B."/>
            <person name="Ruan Y."/>
            <person name="Salzberg S.L."/>
            <person name="Sandelin A."/>
            <person name="Schneider C."/>
            <person name="Schoenbach C."/>
            <person name="Sekiguchi K."/>
            <person name="Semple C.A."/>
            <person name="Seno S."/>
            <person name="Sessa L."/>
            <person name="Sheng Y."/>
            <person name="Shibata Y."/>
            <person name="Shimada H."/>
            <person name="Shimada K."/>
            <person name="Silva D."/>
            <person name="Sinclair B."/>
            <person name="Sperling S."/>
            <person name="Stupka E."/>
            <person name="Sugiura K."/>
            <person name="Sultana R."/>
            <person name="Takenaka Y."/>
            <person name="Taki K."/>
            <person name="Tammoja K."/>
            <person name="Tan S.L."/>
            <person name="Tang S."/>
            <person name="Taylor M.S."/>
            <person name="Tegner J."/>
            <person name="Teichmann S.A."/>
            <person name="Ueda H.R."/>
            <person name="van Nimwegen E."/>
            <person name="Verardo R."/>
            <person name="Wei C.L."/>
            <person name="Yagi K."/>
            <person name="Yamanishi H."/>
            <person name="Zabarovsky E."/>
            <person name="Zhu S."/>
            <person name="Zimmer A."/>
            <person name="Hide W."/>
            <person name="Bult C."/>
            <person name="Grimmond S.M."/>
            <person name="Teasdale R.D."/>
            <person name="Liu E.T."/>
            <person name="Brusic V."/>
            <person name="Quackenbush J."/>
            <person name="Wahlestedt C."/>
            <person name="Mattick J.S."/>
            <person name="Hume D.A."/>
            <person name="Kai C."/>
            <person name="Sasaki D."/>
            <person name="Tomaru Y."/>
            <person name="Fukuda S."/>
            <person name="Kanamori-Katayama M."/>
            <person name="Suzuki M."/>
            <person name="Aoki J."/>
            <person name="Arakawa T."/>
            <person name="Iida J."/>
            <person name="Imamura K."/>
            <person name="Itoh M."/>
            <person name="Kato T."/>
            <person name="Kawaji H."/>
            <person name="Kawagashira N."/>
            <person name="Kawashima T."/>
            <person name="Kojima M."/>
            <person name="Kondo S."/>
            <person name="Konno H."/>
            <person name="Nakano K."/>
            <person name="Ninomiya N."/>
            <person name="Nishio T."/>
            <person name="Okada M."/>
            <person name="Plessy C."/>
            <person name="Shibata K."/>
            <person name="Shiraki T."/>
            <person name="Suzuki S."/>
            <person name="Tagami M."/>
            <person name="Waki K."/>
            <person name="Watahiki A."/>
            <person name="Okamura-Oho Y."/>
            <person name="Suzuki H."/>
            <person name="Kawai J."/>
            <person name="Hayashizaki Y."/>
        </authorList>
    </citation>
    <scope>NUCLEOTIDE SEQUENCE [LARGE SCALE MRNA]</scope>
    <source>
        <tissue>Mammary gland</tissue>
    </source>
</reference>
<reference key="3">
    <citation type="journal article" date="2009" name="PLoS Biol.">
        <title>Lineage-specific biology revealed by a finished genome assembly of the mouse.</title>
        <authorList>
            <person name="Church D.M."/>
            <person name="Goodstadt L."/>
            <person name="Hillier L.W."/>
            <person name="Zody M.C."/>
            <person name="Goldstein S."/>
            <person name="She X."/>
            <person name="Bult C.J."/>
            <person name="Agarwala R."/>
            <person name="Cherry J.L."/>
            <person name="DiCuccio M."/>
            <person name="Hlavina W."/>
            <person name="Kapustin Y."/>
            <person name="Meric P."/>
            <person name="Maglott D."/>
            <person name="Birtle Z."/>
            <person name="Marques A.C."/>
            <person name="Graves T."/>
            <person name="Zhou S."/>
            <person name="Teague B."/>
            <person name="Potamousis K."/>
            <person name="Churas C."/>
            <person name="Place M."/>
            <person name="Herschleb J."/>
            <person name="Runnheim R."/>
            <person name="Forrest D."/>
            <person name="Amos-Landgraf J."/>
            <person name="Schwartz D.C."/>
            <person name="Cheng Z."/>
            <person name="Lindblad-Toh K."/>
            <person name="Eichler E.E."/>
            <person name="Ponting C.P."/>
        </authorList>
    </citation>
    <scope>NUCLEOTIDE SEQUENCE [LARGE SCALE GENOMIC DNA]</scope>
    <source>
        <strain>C57BL/6J</strain>
    </source>
</reference>
<reference key="4">
    <citation type="journal article" date="2007" name="Mol. Cell. Biol.">
        <title>Calpain 6 is involved in microtubule stabilization and cytoskeletal organization.</title>
        <authorList>
            <person name="Tonami K."/>
            <person name="Kurihara Y."/>
            <person name="Aburatani H."/>
            <person name="Uchijima Y."/>
            <person name="Asano T."/>
            <person name="Kurihara H."/>
        </authorList>
    </citation>
    <scope>DEVELOPMENTAL STAGE</scope>
    <scope>FUNCTION</scope>
    <scope>INTERACTION WITH MICROTUBULE</scope>
    <scope>SUBCELLULAR LOCATION</scope>
</reference>
<reference key="5">
    <citation type="journal article" date="2011" name="J. Bone Miner. Res.">
        <title>Calpain-6, a target molecule of glucocorticoids, regulates osteoclastic bone resorption via cytoskeletal organization and microtubule acetylation.</title>
        <authorList>
            <person name="Hong J.M."/>
            <person name="Teitelbaum S.L."/>
            <person name="Kim T.H."/>
            <person name="Ross F.P."/>
            <person name="Kim S.Y."/>
            <person name="Kim H.J."/>
        </authorList>
    </citation>
    <scope>INDUCTION</scope>
    <scope>SUBCELLULAR LOCATION</scope>
</reference>
<reference key="6">
    <citation type="journal article" date="2011" name="J. Cell Sci.">
        <title>Calpain-6, a microtubule-stabilizing protein, regulates Rac1 activity and cell motility through interaction with GEF-H1.</title>
        <authorList>
            <person name="Tonami K."/>
            <person name="Kurihara Y."/>
            <person name="Arima S."/>
            <person name="Nishiyama K."/>
            <person name="Uchijima Y."/>
            <person name="Asano T."/>
            <person name="Sorimachi H."/>
            <person name="Kurihara H."/>
        </authorList>
    </citation>
    <scope>FUNCTION</scope>
    <scope>INTERACTION WITH ARHGEF2</scope>
</reference>
<name>CAN6_MOUSE</name>
<sequence length="641" mass="74543">MGPPLKLFKNQKYQELKQECMKDGRLFCDPTFLPENDSLFFNRLLPGKVVWKRPQDISDDPHLIVGNISNHQLIQGRLGNKAMISAFSCLAVQESHWTKAIPNHKDQEWDPRKPEKYAGIFHFRFWHFGEWTEVVIDDLLPTINGDLVFSFSTSMNEFWNALLEKAYAKLLGCYEALDGLTITDIIMDFTGTLAEIIDMQKGRYTDLVEEKYKLFGELYKTFTKGGLICCSIESPSQEEQEVETDWGLLKGYTYTMTDIRKLRLGERLVEVFSTEKLYMVRLRNPLGRQEWSGPWSEISEEWQQLTVTDRKNLGLVMSDDGEFWMSLEDFCHNFHKLNVCRNVNNPVFGRKELESVVGCWTVDDDPLMNRSGGCYNNRDTFLQNPQYIFTVPEDGHKVIMSLQQKDLRTYRRMGRPDNYIIGFELFKVEMNRRFRLHHLYIQERAGTSTYIDTRTVFLSKYLKKGSYVLVPTMFQHGRTSEFLLRIFSEVPVQLRELTLDMPKMSCWNLARGYPKVVTQITVHSAEGLEKKYANETVNPYLIIKCGKEEVRSPVQKNTVHAIFDTQAIFYRRTTDIPIIIQVWNSRKFCDQFLGQVTLDADPSDCRDLKSLYLRKKGGPTAKVKQGHISFKVISSDDLTEL</sequence>
<comment type="function">
    <text evidence="4 6">Microtubule-stabilizing protein that may be involved in the regulation of microtubule dynamics and cytoskeletal organization. May act as a regulator of RAC1 activity through interaction with ARHGEF2 to control lamellipodial formation and cell mobility. Does not seem to have protease activity as it has lost the active site residues.</text>
</comment>
<comment type="subunit">
    <text evidence="4 6">Interacts (via domain III) with microtubules. Interacts (via domain II) with ARHGEF2 (via the N-terminal zinc finger).</text>
</comment>
<comment type="subcellular location">
    <subcellularLocation>
        <location evidence="1">Cytoplasm</location>
        <location evidence="1">Perinuclear region</location>
    </subcellularLocation>
    <subcellularLocation>
        <location evidence="4 5">Cytoplasm</location>
        <location evidence="4 5">Cytoskeleton</location>
        <location evidence="4 5">Spindle</location>
    </subcellularLocation>
</comment>
<comment type="developmental stage">
    <text evidence="4">At 10.5 dpc expressed in the mandibular arches, heart and limb buds.</text>
</comment>
<comment type="induction">
    <text evidence="5">Up-regulated during the osteoclasogenic process. Inhibited by dexamethaxone during the osteoclasogenic process.</text>
</comment>
<comment type="similarity">
    <text evidence="7">Belongs to the peptidase C2 family.</text>
</comment>
<feature type="chain" id="PRO_0000207718" description="Calpain-6">
    <location>
        <begin position="1"/>
        <end position="641"/>
    </location>
</feature>
<feature type="domain" description="Calpain catalytic" evidence="3">
    <location>
        <begin position="26"/>
        <end position="343"/>
    </location>
</feature>
<feature type="domain" description="C2" evidence="2">
    <location>
        <begin position="498"/>
        <end position="621"/>
    </location>
</feature>
<feature type="region of interest" description="Domain III">
    <location>
        <begin position="344"/>
        <end position="495"/>
    </location>
</feature>
<feature type="sequence conflict" description="In Ref. 1; CAA73161." evidence="7" ref="1">
    <original>I</original>
    <variation>V</variation>
    <location>
        <position position="568"/>
    </location>
</feature>